<gene>
    <name evidence="1" type="primary">bshC</name>
    <name type="ordered locus">Ctha_1139</name>
</gene>
<comment type="similarity">
    <text evidence="1">Belongs to the BshC family.</text>
</comment>
<feature type="chain" id="PRO_0000378231" description="Putative cysteine ligase BshC">
    <location>
        <begin position="1"/>
        <end position="561"/>
    </location>
</feature>
<feature type="coiled-coil region" evidence="1">
    <location>
        <begin position="472"/>
        <end position="517"/>
    </location>
</feature>
<reference key="1">
    <citation type="submission" date="2008-06" db="EMBL/GenBank/DDBJ databases">
        <title>Complete sequence of Chloroherpeton thalassium ATCC 35110.</title>
        <authorList>
            <consortium name="US DOE Joint Genome Institute"/>
            <person name="Lucas S."/>
            <person name="Copeland A."/>
            <person name="Lapidus A."/>
            <person name="Glavina del Rio T."/>
            <person name="Dalin E."/>
            <person name="Tice H."/>
            <person name="Bruce D."/>
            <person name="Goodwin L."/>
            <person name="Pitluck S."/>
            <person name="Schmutz J."/>
            <person name="Larimer F."/>
            <person name="Land M."/>
            <person name="Hauser L."/>
            <person name="Kyrpides N."/>
            <person name="Mikhailova N."/>
            <person name="Liu Z."/>
            <person name="Li T."/>
            <person name="Zhao F."/>
            <person name="Overmann J."/>
            <person name="Bryant D.A."/>
            <person name="Richardson P."/>
        </authorList>
    </citation>
    <scope>NUCLEOTIDE SEQUENCE [LARGE SCALE GENOMIC DNA]</scope>
    <source>
        <strain>ATCC 35110 / GB-78</strain>
    </source>
</reference>
<organism>
    <name type="scientific">Chloroherpeton thalassium (strain ATCC 35110 / GB-78)</name>
    <dbReference type="NCBI Taxonomy" id="517418"/>
    <lineage>
        <taxon>Bacteria</taxon>
        <taxon>Pseudomonadati</taxon>
        <taxon>Chlorobiota</taxon>
        <taxon>Chlorobiia</taxon>
        <taxon>Chlorobiales</taxon>
        <taxon>Chloroherpetonaceae</taxon>
        <taxon>Chloroherpeton</taxon>
    </lineage>
</organism>
<proteinExistence type="inferred from homology"/>
<name>BSHC_CHLT3</name>
<protein>
    <recommendedName>
        <fullName evidence="1">Putative cysteine ligase BshC</fullName>
        <ecNumber evidence="1">6.-.-.-</ecNumber>
    </recommendedName>
</protein>
<evidence type="ECO:0000255" key="1">
    <source>
        <dbReference type="HAMAP-Rule" id="MF_01867"/>
    </source>
</evidence>
<keyword id="KW-0175">Coiled coil</keyword>
<keyword id="KW-0436">Ligase</keyword>
<keyword id="KW-1185">Reference proteome</keyword>
<accession>B3QYH5</accession>
<dbReference type="EC" id="6.-.-.-" evidence="1"/>
<dbReference type="EMBL" id="CP001100">
    <property type="protein sequence ID" value="ACF13603.1"/>
    <property type="molecule type" value="Genomic_DNA"/>
</dbReference>
<dbReference type="RefSeq" id="WP_012499687.1">
    <property type="nucleotide sequence ID" value="NC_011026.1"/>
</dbReference>
<dbReference type="SMR" id="B3QYH5"/>
<dbReference type="STRING" id="517418.Ctha_1139"/>
<dbReference type="KEGG" id="cts:Ctha_1139"/>
<dbReference type="eggNOG" id="COG4365">
    <property type="taxonomic scope" value="Bacteria"/>
</dbReference>
<dbReference type="HOGENOM" id="CLU_022249_1_0_10"/>
<dbReference type="OrthoDB" id="9765151at2"/>
<dbReference type="Proteomes" id="UP000001208">
    <property type="component" value="Chromosome"/>
</dbReference>
<dbReference type="GO" id="GO:0016874">
    <property type="term" value="F:ligase activity"/>
    <property type="evidence" value="ECO:0007669"/>
    <property type="project" value="UniProtKB-UniRule"/>
</dbReference>
<dbReference type="HAMAP" id="MF_01867">
    <property type="entry name" value="BshC"/>
    <property type="match status" value="1"/>
</dbReference>
<dbReference type="InterPro" id="IPR011199">
    <property type="entry name" value="Bacillithiol_biosynth_BshC"/>
</dbReference>
<dbReference type="InterPro" id="IPR055399">
    <property type="entry name" value="CC_BshC"/>
</dbReference>
<dbReference type="InterPro" id="IPR055398">
    <property type="entry name" value="Rossmann-like_BshC"/>
</dbReference>
<dbReference type="NCBIfam" id="TIGR03998">
    <property type="entry name" value="thiol_BshC"/>
    <property type="match status" value="1"/>
</dbReference>
<dbReference type="Pfam" id="PF24850">
    <property type="entry name" value="CC_BshC"/>
    <property type="match status" value="1"/>
</dbReference>
<dbReference type="Pfam" id="PF10079">
    <property type="entry name" value="Rossmann-like_BshC"/>
    <property type="match status" value="1"/>
</dbReference>
<dbReference type="PIRSF" id="PIRSF012535">
    <property type="entry name" value="UCP012535"/>
    <property type="match status" value="1"/>
</dbReference>
<sequence length="561" mass="63855">MQSYSIPFHSISEGGKQFSQLFLDYTSNTLATDALISQFYQHDYRNPAHLSAQIQTVSGRTYQRPELVLELTRQNQLFGSGPKTFERIQSLLSKKTLAVVTGQQVGFLTGPVYTIYKTLSAIVLTEKWHEHYPDFEFVPVFWLESEDHDYEEISHVSLLKGNSLERFSYSEASYQALSSAGATQITPEFLDWLGKEILEAFPESDYKQKMLTLVRESYKEGVSYEMAFATLLARLFYDEGLIIVSSHPKGFKTLAKSVFIRELETFPASSQNIIAQSARLEESGYDAQAKPRPINLYFFQENQRLKIEPRRQGSVELLPGKTTFSQHEMLEFAHSAPELFSPNVVLRPIVQDTVLPTVAYVAGPGEISYFGQFLRNYQFFNIPMPIIYPRASLSLLEPKISRVFEKSARILNEKEISGSLSRFYQNSQQFINELLLAASTVDIEDEATTAIQGLSDIFKKFGLKLSEIDPTLAQSVEKVMQSTLNQVENLKSKTIKAEKQRHNDLIAQIEKSRDNLLPGGVLQERVLNGFHFFNKFDTTLIKLLKELLLTKAFDKHLIVPL</sequence>